<sequence length="307" mass="33386">MDAIRIERLSKTFPNGRKGLEDIDLAIAPGEMVALIGASGSGKSTLLRQIASFSSSDARPSRIDIFGRSIQRDGRIARDVRRMRRDIGFVFQQFNLVDRLSVETNVLIGALARVPMWRRLAGRFSRADRALAAQALGEVGIAEHARERAANLSGGQQQRAALARALVQRARIILADEPIASLDPAASRRVMEMLRALNANHRLTVLVSLHQIDVALRFCPRVVALRAGRIVYDGPSAALTRERLHALYGDDAHLPFAVGDEVRPAAREAAGEPARRAPAAFDSAGSPDLPDSQPASPRRMLAASSMR</sequence>
<gene>
    <name evidence="1" type="primary">phnC</name>
    <name type="ordered locus">BURPS1710b_3350</name>
</gene>
<accession>Q3JNY2</accession>
<organism>
    <name type="scientific">Burkholderia pseudomallei (strain 1710b)</name>
    <dbReference type="NCBI Taxonomy" id="320372"/>
    <lineage>
        <taxon>Bacteria</taxon>
        <taxon>Pseudomonadati</taxon>
        <taxon>Pseudomonadota</taxon>
        <taxon>Betaproteobacteria</taxon>
        <taxon>Burkholderiales</taxon>
        <taxon>Burkholderiaceae</taxon>
        <taxon>Burkholderia</taxon>
        <taxon>pseudomallei group</taxon>
    </lineage>
</organism>
<evidence type="ECO:0000255" key="1">
    <source>
        <dbReference type="HAMAP-Rule" id="MF_01713"/>
    </source>
</evidence>
<evidence type="ECO:0000256" key="2">
    <source>
        <dbReference type="SAM" id="MobiDB-lite"/>
    </source>
</evidence>
<proteinExistence type="inferred from homology"/>
<reference key="1">
    <citation type="journal article" date="2010" name="Genome Biol. Evol.">
        <title>Continuing evolution of Burkholderia mallei through genome reduction and large-scale rearrangements.</title>
        <authorList>
            <person name="Losada L."/>
            <person name="Ronning C.M."/>
            <person name="DeShazer D."/>
            <person name="Woods D."/>
            <person name="Fedorova N."/>
            <person name="Kim H.S."/>
            <person name="Shabalina S.A."/>
            <person name="Pearson T.R."/>
            <person name="Brinkac L."/>
            <person name="Tan P."/>
            <person name="Nandi T."/>
            <person name="Crabtree J."/>
            <person name="Badger J."/>
            <person name="Beckstrom-Sternberg S."/>
            <person name="Saqib M."/>
            <person name="Schutzer S.E."/>
            <person name="Keim P."/>
            <person name="Nierman W.C."/>
        </authorList>
    </citation>
    <scope>NUCLEOTIDE SEQUENCE [LARGE SCALE GENOMIC DNA]</scope>
    <source>
        <strain>1710b</strain>
    </source>
</reference>
<name>PHNC_BURP1</name>
<keyword id="KW-0067">ATP-binding</keyword>
<keyword id="KW-0997">Cell inner membrane</keyword>
<keyword id="KW-1003">Cell membrane</keyword>
<keyword id="KW-0472">Membrane</keyword>
<keyword id="KW-0547">Nucleotide-binding</keyword>
<keyword id="KW-0918">Phosphonate transport</keyword>
<keyword id="KW-1278">Translocase</keyword>
<keyword id="KW-0813">Transport</keyword>
<comment type="function">
    <text evidence="1">Part of the ABC transporter complex PhnCDE involved in phosphonates import. Responsible for energy coupling to the transport system.</text>
</comment>
<comment type="catalytic activity">
    <reaction evidence="1">
        <text>phosphonate(out) + ATP + H2O = phosphonate(in) + ADP + phosphate + H(+)</text>
        <dbReference type="Rhea" id="RHEA:18065"/>
        <dbReference type="ChEBI" id="CHEBI:15377"/>
        <dbReference type="ChEBI" id="CHEBI:15378"/>
        <dbReference type="ChEBI" id="CHEBI:16215"/>
        <dbReference type="ChEBI" id="CHEBI:30616"/>
        <dbReference type="ChEBI" id="CHEBI:43474"/>
        <dbReference type="ChEBI" id="CHEBI:456216"/>
        <dbReference type="EC" id="7.3.2.2"/>
    </reaction>
</comment>
<comment type="subunit">
    <text evidence="1">The complex is composed of two ATP-binding proteins (PhnC), two transmembrane proteins (PhnE) and a solute-binding protein (PhnD).</text>
</comment>
<comment type="subcellular location">
    <subcellularLocation>
        <location evidence="1">Cell inner membrane</location>
        <topology evidence="1">Peripheral membrane protein</topology>
    </subcellularLocation>
</comment>
<comment type="similarity">
    <text evidence="1">Belongs to the ABC transporter superfamily. Phosphonates importer (TC 3.A.1.9.1) family.</text>
</comment>
<dbReference type="EC" id="7.3.2.2" evidence="1"/>
<dbReference type="EMBL" id="CP000124">
    <property type="protein sequence ID" value="ABA48695.1"/>
    <property type="molecule type" value="Genomic_DNA"/>
</dbReference>
<dbReference type="RefSeq" id="WP_004527694.1">
    <property type="nucleotide sequence ID" value="NC_007434.1"/>
</dbReference>
<dbReference type="SMR" id="Q3JNY2"/>
<dbReference type="EnsemblBacteria" id="ABA48695">
    <property type="protein sequence ID" value="ABA48695"/>
    <property type="gene ID" value="BURPS1710b_3350"/>
</dbReference>
<dbReference type="GeneID" id="93061440"/>
<dbReference type="KEGG" id="bpm:BURPS1710b_3350"/>
<dbReference type="HOGENOM" id="CLU_000604_1_22_4"/>
<dbReference type="Proteomes" id="UP000002700">
    <property type="component" value="Chromosome I"/>
</dbReference>
<dbReference type="GO" id="GO:0005886">
    <property type="term" value="C:plasma membrane"/>
    <property type="evidence" value="ECO:0007669"/>
    <property type="project" value="UniProtKB-SubCell"/>
</dbReference>
<dbReference type="GO" id="GO:0015416">
    <property type="term" value="F:ABC-type phosphonate transporter activity"/>
    <property type="evidence" value="ECO:0007669"/>
    <property type="project" value="UniProtKB-EC"/>
</dbReference>
<dbReference type="GO" id="GO:0005524">
    <property type="term" value="F:ATP binding"/>
    <property type="evidence" value="ECO:0007669"/>
    <property type="project" value="UniProtKB-KW"/>
</dbReference>
<dbReference type="GO" id="GO:0016887">
    <property type="term" value="F:ATP hydrolysis activity"/>
    <property type="evidence" value="ECO:0007669"/>
    <property type="project" value="InterPro"/>
</dbReference>
<dbReference type="CDD" id="cd03256">
    <property type="entry name" value="ABC_PhnC_transporter"/>
    <property type="match status" value="1"/>
</dbReference>
<dbReference type="Gene3D" id="3.40.50.300">
    <property type="entry name" value="P-loop containing nucleotide triphosphate hydrolases"/>
    <property type="match status" value="1"/>
</dbReference>
<dbReference type="InterPro" id="IPR003593">
    <property type="entry name" value="AAA+_ATPase"/>
</dbReference>
<dbReference type="InterPro" id="IPR003439">
    <property type="entry name" value="ABC_transporter-like_ATP-bd"/>
</dbReference>
<dbReference type="InterPro" id="IPR017871">
    <property type="entry name" value="ABC_transporter-like_CS"/>
</dbReference>
<dbReference type="InterPro" id="IPR012693">
    <property type="entry name" value="ABC_transpr_PhnC"/>
</dbReference>
<dbReference type="InterPro" id="IPR050086">
    <property type="entry name" value="MetN_ABC_transporter-like"/>
</dbReference>
<dbReference type="InterPro" id="IPR027417">
    <property type="entry name" value="P-loop_NTPase"/>
</dbReference>
<dbReference type="NCBIfam" id="TIGR02315">
    <property type="entry name" value="ABC_phnC"/>
    <property type="match status" value="1"/>
</dbReference>
<dbReference type="PANTHER" id="PTHR43166">
    <property type="entry name" value="AMINO ACID IMPORT ATP-BINDING PROTEIN"/>
    <property type="match status" value="1"/>
</dbReference>
<dbReference type="PANTHER" id="PTHR43166:SF6">
    <property type="entry name" value="PHOSPHONATES IMPORT ATP-BINDING PROTEIN PHNC"/>
    <property type="match status" value="1"/>
</dbReference>
<dbReference type="Pfam" id="PF00005">
    <property type="entry name" value="ABC_tran"/>
    <property type="match status" value="1"/>
</dbReference>
<dbReference type="SMART" id="SM00382">
    <property type="entry name" value="AAA"/>
    <property type="match status" value="1"/>
</dbReference>
<dbReference type="SUPFAM" id="SSF52540">
    <property type="entry name" value="P-loop containing nucleoside triphosphate hydrolases"/>
    <property type="match status" value="1"/>
</dbReference>
<dbReference type="PROSITE" id="PS00211">
    <property type="entry name" value="ABC_TRANSPORTER_1"/>
    <property type="match status" value="1"/>
</dbReference>
<dbReference type="PROSITE" id="PS50893">
    <property type="entry name" value="ABC_TRANSPORTER_2"/>
    <property type="match status" value="1"/>
</dbReference>
<dbReference type="PROSITE" id="PS51249">
    <property type="entry name" value="PHNC"/>
    <property type="match status" value="1"/>
</dbReference>
<feature type="chain" id="PRO_0000274706" description="Phosphonates import ATP-binding protein PhnC">
    <location>
        <begin position="1"/>
        <end position="307"/>
    </location>
</feature>
<feature type="domain" description="ABC transporter" evidence="1">
    <location>
        <begin position="4"/>
        <end position="252"/>
    </location>
</feature>
<feature type="region of interest" description="Disordered" evidence="2">
    <location>
        <begin position="265"/>
        <end position="307"/>
    </location>
</feature>
<feature type="compositionally biased region" description="Basic and acidic residues" evidence="2">
    <location>
        <begin position="265"/>
        <end position="275"/>
    </location>
</feature>
<feature type="binding site" evidence="1">
    <location>
        <begin position="37"/>
        <end position="44"/>
    </location>
    <ligand>
        <name>ATP</name>
        <dbReference type="ChEBI" id="CHEBI:30616"/>
    </ligand>
</feature>
<protein>
    <recommendedName>
        <fullName evidence="1">Phosphonates import ATP-binding protein PhnC</fullName>
        <ecNumber evidence="1">7.3.2.2</ecNumber>
    </recommendedName>
</protein>